<keyword id="KW-0067">ATP-binding</keyword>
<keyword id="KW-0131">Cell cycle</keyword>
<keyword id="KW-0132">Cell division</keyword>
<keyword id="KW-0133">Cell shape</keyword>
<keyword id="KW-0961">Cell wall biogenesis/degradation</keyword>
<keyword id="KW-0963">Cytoplasm</keyword>
<keyword id="KW-0436">Ligase</keyword>
<keyword id="KW-0547">Nucleotide-binding</keyword>
<keyword id="KW-0573">Peptidoglycan synthesis</keyword>
<keyword id="KW-1185">Reference proteome</keyword>
<gene>
    <name evidence="1" type="primary">murD</name>
    <name type="ordered locus">cce_0240</name>
</gene>
<organism>
    <name type="scientific">Crocosphaera subtropica (strain ATCC 51142 / BH68)</name>
    <name type="common">Cyanothece sp. (strain ATCC 51142)</name>
    <dbReference type="NCBI Taxonomy" id="43989"/>
    <lineage>
        <taxon>Bacteria</taxon>
        <taxon>Bacillati</taxon>
        <taxon>Cyanobacteriota</taxon>
        <taxon>Cyanophyceae</taxon>
        <taxon>Oscillatoriophycideae</taxon>
        <taxon>Chroococcales</taxon>
        <taxon>Aphanothecaceae</taxon>
        <taxon>Crocosphaera</taxon>
        <taxon>Crocosphaera subtropica</taxon>
    </lineage>
</organism>
<comment type="function">
    <text evidence="1">Cell wall formation. Catalyzes the addition of glutamate to the nucleotide precursor UDP-N-acetylmuramoyl-L-alanine (UMA).</text>
</comment>
<comment type="catalytic activity">
    <reaction evidence="1">
        <text>UDP-N-acetyl-alpha-D-muramoyl-L-alanine + D-glutamate + ATP = UDP-N-acetyl-alpha-D-muramoyl-L-alanyl-D-glutamate + ADP + phosphate + H(+)</text>
        <dbReference type="Rhea" id="RHEA:16429"/>
        <dbReference type="ChEBI" id="CHEBI:15378"/>
        <dbReference type="ChEBI" id="CHEBI:29986"/>
        <dbReference type="ChEBI" id="CHEBI:30616"/>
        <dbReference type="ChEBI" id="CHEBI:43474"/>
        <dbReference type="ChEBI" id="CHEBI:83898"/>
        <dbReference type="ChEBI" id="CHEBI:83900"/>
        <dbReference type="ChEBI" id="CHEBI:456216"/>
        <dbReference type="EC" id="6.3.2.9"/>
    </reaction>
</comment>
<comment type="pathway">
    <text evidence="1">Cell wall biogenesis; peptidoglycan biosynthesis.</text>
</comment>
<comment type="subcellular location">
    <subcellularLocation>
        <location evidence="1">Cytoplasm</location>
    </subcellularLocation>
</comment>
<comment type="similarity">
    <text evidence="1">Belongs to the MurCDEF family.</text>
</comment>
<accession>B1X090</accession>
<protein>
    <recommendedName>
        <fullName evidence="1">UDP-N-acetylmuramoylalanine--D-glutamate ligase</fullName>
        <ecNumber evidence="1">6.3.2.9</ecNumber>
    </recommendedName>
    <alternativeName>
        <fullName evidence="1">D-glutamic acid-adding enzyme</fullName>
    </alternativeName>
    <alternativeName>
        <fullName evidence="1">UDP-N-acetylmuramoyl-L-alanyl-D-glutamate synthetase</fullName>
    </alternativeName>
</protein>
<reference key="1">
    <citation type="journal article" date="2008" name="Proc. Natl. Acad. Sci. U.S.A.">
        <title>The genome of Cyanothece 51142, a unicellular diazotrophic cyanobacterium important in the marine nitrogen cycle.</title>
        <authorList>
            <person name="Welsh E.A."/>
            <person name="Liberton M."/>
            <person name="Stoeckel J."/>
            <person name="Loh T."/>
            <person name="Elvitigala T."/>
            <person name="Wang C."/>
            <person name="Wollam A."/>
            <person name="Fulton R.S."/>
            <person name="Clifton S.W."/>
            <person name="Jacobs J.M."/>
            <person name="Aurora R."/>
            <person name="Ghosh B.K."/>
            <person name="Sherman L.A."/>
            <person name="Smith R.D."/>
            <person name="Wilson R.K."/>
            <person name="Pakrasi H.B."/>
        </authorList>
    </citation>
    <scope>NUCLEOTIDE SEQUENCE [LARGE SCALE GENOMIC DNA]</scope>
    <source>
        <strain>ATCC 51142 / BH68</strain>
    </source>
</reference>
<dbReference type="EC" id="6.3.2.9" evidence="1"/>
<dbReference type="EMBL" id="CP000806">
    <property type="protein sequence ID" value="ACB49591.1"/>
    <property type="molecule type" value="Genomic_DNA"/>
</dbReference>
<dbReference type="RefSeq" id="WP_009546735.1">
    <property type="nucleotide sequence ID" value="NC_010546.1"/>
</dbReference>
<dbReference type="SMR" id="B1X090"/>
<dbReference type="STRING" id="43989.cce_0240"/>
<dbReference type="KEGG" id="cyt:cce_0240"/>
<dbReference type="eggNOG" id="COG0771">
    <property type="taxonomic scope" value="Bacteria"/>
</dbReference>
<dbReference type="HOGENOM" id="CLU_032540_0_0_3"/>
<dbReference type="OrthoDB" id="9809796at2"/>
<dbReference type="UniPathway" id="UPA00219"/>
<dbReference type="Proteomes" id="UP000001203">
    <property type="component" value="Chromosome circular"/>
</dbReference>
<dbReference type="GO" id="GO:0005737">
    <property type="term" value="C:cytoplasm"/>
    <property type="evidence" value="ECO:0007669"/>
    <property type="project" value="UniProtKB-SubCell"/>
</dbReference>
<dbReference type="GO" id="GO:0005524">
    <property type="term" value="F:ATP binding"/>
    <property type="evidence" value="ECO:0007669"/>
    <property type="project" value="UniProtKB-UniRule"/>
</dbReference>
<dbReference type="GO" id="GO:0008764">
    <property type="term" value="F:UDP-N-acetylmuramoylalanine-D-glutamate ligase activity"/>
    <property type="evidence" value="ECO:0007669"/>
    <property type="project" value="UniProtKB-UniRule"/>
</dbReference>
<dbReference type="GO" id="GO:0051301">
    <property type="term" value="P:cell division"/>
    <property type="evidence" value="ECO:0007669"/>
    <property type="project" value="UniProtKB-KW"/>
</dbReference>
<dbReference type="GO" id="GO:0071555">
    <property type="term" value="P:cell wall organization"/>
    <property type="evidence" value="ECO:0007669"/>
    <property type="project" value="UniProtKB-KW"/>
</dbReference>
<dbReference type="GO" id="GO:0009252">
    <property type="term" value="P:peptidoglycan biosynthetic process"/>
    <property type="evidence" value="ECO:0007669"/>
    <property type="project" value="UniProtKB-UniRule"/>
</dbReference>
<dbReference type="GO" id="GO:0008360">
    <property type="term" value="P:regulation of cell shape"/>
    <property type="evidence" value="ECO:0007669"/>
    <property type="project" value="UniProtKB-KW"/>
</dbReference>
<dbReference type="Gene3D" id="3.90.190.20">
    <property type="entry name" value="Mur ligase, C-terminal domain"/>
    <property type="match status" value="1"/>
</dbReference>
<dbReference type="Gene3D" id="3.40.1190.10">
    <property type="entry name" value="Mur-like, catalytic domain"/>
    <property type="match status" value="1"/>
</dbReference>
<dbReference type="Gene3D" id="3.40.50.720">
    <property type="entry name" value="NAD(P)-binding Rossmann-like Domain"/>
    <property type="match status" value="1"/>
</dbReference>
<dbReference type="HAMAP" id="MF_00639">
    <property type="entry name" value="MurD"/>
    <property type="match status" value="1"/>
</dbReference>
<dbReference type="InterPro" id="IPR036565">
    <property type="entry name" value="Mur-like_cat_sf"/>
</dbReference>
<dbReference type="InterPro" id="IPR004101">
    <property type="entry name" value="Mur_ligase_C"/>
</dbReference>
<dbReference type="InterPro" id="IPR036615">
    <property type="entry name" value="Mur_ligase_C_dom_sf"/>
</dbReference>
<dbReference type="InterPro" id="IPR013221">
    <property type="entry name" value="Mur_ligase_cen"/>
</dbReference>
<dbReference type="InterPro" id="IPR005762">
    <property type="entry name" value="MurD"/>
</dbReference>
<dbReference type="NCBIfam" id="TIGR01087">
    <property type="entry name" value="murD"/>
    <property type="match status" value="1"/>
</dbReference>
<dbReference type="PANTHER" id="PTHR43692">
    <property type="entry name" value="UDP-N-ACETYLMURAMOYLALANINE--D-GLUTAMATE LIGASE"/>
    <property type="match status" value="1"/>
</dbReference>
<dbReference type="PANTHER" id="PTHR43692:SF1">
    <property type="entry name" value="UDP-N-ACETYLMURAMOYLALANINE--D-GLUTAMATE LIGASE"/>
    <property type="match status" value="1"/>
</dbReference>
<dbReference type="Pfam" id="PF02875">
    <property type="entry name" value="Mur_ligase_C"/>
    <property type="match status" value="1"/>
</dbReference>
<dbReference type="Pfam" id="PF08245">
    <property type="entry name" value="Mur_ligase_M"/>
    <property type="match status" value="1"/>
</dbReference>
<dbReference type="Pfam" id="PF21799">
    <property type="entry name" value="MurD-like_N"/>
    <property type="match status" value="1"/>
</dbReference>
<dbReference type="SUPFAM" id="SSF51984">
    <property type="entry name" value="MurCD N-terminal domain"/>
    <property type="match status" value="1"/>
</dbReference>
<dbReference type="SUPFAM" id="SSF53623">
    <property type="entry name" value="MurD-like peptide ligases, catalytic domain"/>
    <property type="match status" value="1"/>
</dbReference>
<dbReference type="SUPFAM" id="SSF53244">
    <property type="entry name" value="MurD-like peptide ligases, peptide-binding domain"/>
    <property type="match status" value="1"/>
</dbReference>
<evidence type="ECO:0000255" key="1">
    <source>
        <dbReference type="HAMAP-Rule" id="MF_00639"/>
    </source>
</evidence>
<proteinExistence type="inferred from homology"/>
<sequence length="456" mass="50405">MATAYIIGLGRSGIAAAKCLKQDGWEVIISDCATSPNLIPLQQQLHAEGITVKLGHTPNLNASDLPELIVVSPGVPWDTPFLIEARERQIDTIGELELAWRYLQSSPWVGITGTNGKTTTTALVAAIFQGAKLNAPSCGNIGYAACELALSKLKKDNTSNYDWIIAEISSYQCESSQELSPKIGLWTTFTADHLSRHKTLDNYYAIKASLLYRSEYQIFNGDDPYLHQTGLHQWADAYWTTVKGKDNLLCDPSQGVYIQDNWVVAFGELILPLNLFKMPGFHNQQNLLMAIAAARLAGIEKGAIASAIATFTGVPHRLEYIRTVDGIDFINDSKATNYDAAEVGLLSVQSPTILIAGGEEKEGDDKKWIAQIKSKVIKVLLIGEAAENFAKRLHDCDYHDYEIVETMDKAIERSLILGQELKAKVILLSPACASFDQYQSFEHRGEHFRELCQKLI</sequence>
<feature type="chain" id="PRO_1000147402" description="UDP-N-acetylmuramoylalanine--D-glutamate ligase">
    <location>
        <begin position="1"/>
        <end position="456"/>
    </location>
</feature>
<feature type="binding site" evidence="1">
    <location>
        <begin position="113"/>
        <end position="119"/>
    </location>
    <ligand>
        <name>ATP</name>
        <dbReference type="ChEBI" id="CHEBI:30616"/>
    </ligand>
</feature>
<name>MURD_CROS5</name>